<sequence>MKIVVPVMPRSLEEAQEIDLSKFDSVDIIEWRADALPKDDIINVAPAIFEKFAGHEIIFTLRTTREGGNIVLSDAEYVELIQKINSIYNPDYIDFEYFSHKEVFQEMLEFPNLVLSYHNFQETPENIMEIFSELTALAPRVVKIAVMPKNEQDVLDVMNYTRGFKTINPDQVYATVSMSKIGRISRFAGDVTGSSWTFAYLDSSIAPGQITISEMKRVKALLDAD</sequence>
<comment type="function">
    <text evidence="1">Involved in the third step of the chorismate pathway, which leads to the biosynthesis of aromatic amino acids. Catalyzes the cis-dehydration of 3-dehydroquinate (DHQ) and introduces the first double bond of the aromatic ring to yield 3-dehydroshikimate.</text>
</comment>
<comment type="catalytic activity">
    <reaction evidence="1">
        <text>3-dehydroquinate = 3-dehydroshikimate + H2O</text>
        <dbReference type="Rhea" id="RHEA:21096"/>
        <dbReference type="ChEBI" id="CHEBI:15377"/>
        <dbReference type="ChEBI" id="CHEBI:16630"/>
        <dbReference type="ChEBI" id="CHEBI:32364"/>
        <dbReference type="EC" id="4.2.1.10"/>
    </reaction>
</comment>
<comment type="pathway">
    <text evidence="1">Metabolic intermediate biosynthesis; chorismate biosynthesis; chorismate from D-erythrose 4-phosphate and phosphoenolpyruvate: step 3/7.</text>
</comment>
<comment type="subunit">
    <text evidence="1">Homodimer.</text>
</comment>
<comment type="similarity">
    <text evidence="1">Belongs to the type-I 3-dehydroquinase family.</text>
</comment>
<organism>
    <name type="scientific">Streptococcus agalactiae serotype III (strain NEM316)</name>
    <dbReference type="NCBI Taxonomy" id="211110"/>
    <lineage>
        <taxon>Bacteria</taxon>
        <taxon>Bacillati</taxon>
        <taxon>Bacillota</taxon>
        <taxon>Bacilli</taxon>
        <taxon>Lactobacillales</taxon>
        <taxon>Streptococcaceae</taxon>
        <taxon>Streptococcus</taxon>
    </lineage>
</organism>
<dbReference type="EC" id="4.2.1.10" evidence="1"/>
<dbReference type="EMBL" id="AL766850">
    <property type="protein sequence ID" value="CAD47108.1"/>
    <property type="molecule type" value="Genomic_DNA"/>
</dbReference>
<dbReference type="RefSeq" id="WP_000707048.1">
    <property type="nucleotide sequence ID" value="NC_004368.1"/>
</dbReference>
<dbReference type="SMR" id="Q8E4F2"/>
<dbReference type="GeneID" id="66886255"/>
<dbReference type="KEGG" id="san:aroD"/>
<dbReference type="eggNOG" id="COG0710">
    <property type="taxonomic scope" value="Bacteria"/>
</dbReference>
<dbReference type="HOGENOM" id="CLU_064444_0_0_9"/>
<dbReference type="UniPathway" id="UPA00053">
    <property type="reaction ID" value="UER00086"/>
</dbReference>
<dbReference type="Proteomes" id="UP000000823">
    <property type="component" value="Chromosome"/>
</dbReference>
<dbReference type="GO" id="GO:0003855">
    <property type="term" value="F:3-dehydroquinate dehydratase activity"/>
    <property type="evidence" value="ECO:0007669"/>
    <property type="project" value="UniProtKB-UniRule"/>
</dbReference>
<dbReference type="GO" id="GO:0046279">
    <property type="term" value="P:3,4-dihydroxybenzoate biosynthetic process"/>
    <property type="evidence" value="ECO:0007669"/>
    <property type="project" value="TreeGrafter"/>
</dbReference>
<dbReference type="GO" id="GO:0008652">
    <property type="term" value="P:amino acid biosynthetic process"/>
    <property type="evidence" value="ECO:0007669"/>
    <property type="project" value="UniProtKB-KW"/>
</dbReference>
<dbReference type="GO" id="GO:0009073">
    <property type="term" value="P:aromatic amino acid family biosynthetic process"/>
    <property type="evidence" value="ECO:0007669"/>
    <property type="project" value="UniProtKB-KW"/>
</dbReference>
<dbReference type="GO" id="GO:0009423">
    <property type="term" value="P:chorismate biosynthetic process"/>
    <property type="evidence" value="ECO:0007669"/>
    <property type="project" value="UniProtKB-UniRule"/>
</dbReference>
<dbReference type="CDD" id="cd00502">
    <property type="entry name" value="DHQase_I"/>
    <property type="match status" value="1"/>
</dbReference>
<dbReference type="FunFam" id="3.20.20.70:FF:000047">
    <property type="entry name" value="3-dehydroquinate dehydratase"/>
    <property type="match status" value="1"/>
</dbReference>
<dbReference type="Gene3D" id="3.20.20.70">
    <property type="entry name" value="Aldolase class I"/>
    <property type="match status" value="1"/>
</dbReference>
<dbReference type="HAMAP" id="MF_00214">
    <property type="entry name" value="AroD"/>
    <property type="match status" value="1"/>
</dbReference>
<dbReference type="InterPro" id="IPR013785">
    <property type="entry name" value="Aldolase_TIM"/>
</dbReference>
<dbReference type="InterPro" id="IPR001381">
    <property type="entry name" value="DHquinase_I"/>
</dbReference>
<dbReference type="InterPro" id="IPR050146">
    <property type="entry name" value="Type-I_3-dehydroquinase"/>
</dbReference>
<dbReference type="NCBIfam" id="TIGR01093">
    <property type="entry name" value="aroD"/>
    <property type="match status" value="1"/>
</dbReference>
<dbReference type="PANTHER" id="PTHR43699">
    <property type="entry name" value="3-DEHYDROQUINATE DEHYDRATASE"/>
    <property type="match status" value="1"/>
</dbReference>
<dbReference type="PANTHER" id="PTHR43699:SF1">
    <property type="entry name" value="3-DEHYDROQUINATE DEHYDRATASE"/>
    <property type="match status" value="1"/>
</dbReference>
<dbReference type="Pfam" id="PF01487">
    <property type="entry name" value="DHquinase_I"/>
    <property type="match status" value="1"/>
</dbReference>
<dbReference type="SUPFAM" id="SSF51569">
    <property type="entry name" value="Aldolase"/>
    <property type="match status" value="1"/>
</dbReference>
<reference key="1">
    <citation type="journal article" date="2002" name="Mol. Microbiol.">
        <title>Genome sequence of Streptococcus agalactiae, a pathogen causing invasive neonatal disease.</title>
        <authorList>
            <person name="Glaser P."/>
            <person name="Rusniok C."/>
            <person name="Buchrieser C."/>
            <person name="Chevalier F."/>
            <person name="Frangeul L."/>
            <person name="Msadek T."/>
            <person name="Zouine M."/>
            <person name="Couve E."/>
            <person name="Lalioui L."/>
            <person name="Poyart C."/>
            <person name="Trieu-Cuot P."/>
            <person name="Kunst F."/>
        </authorList>
    </citation>
    <scope>NUCLEOTIDE SEQUENCE [LARGE SCALE GENOMIC DNA]</scope>
    <source>
        <strain>NEM316</strain>
    </source>
</reference>
<evidence type="ECO:0000255" key="1">
    <source>
        <dbReference type="HAMAP-Rule" id="MF_00214"/>
    </source>
</evidence>
<proteinExistence type="inferred from homology"/>
<accession>Q8E4F2</accession>
<name>AROD_STRA3</name>
<feature type="chain" id="PRO_1000043192" description="3-dehydroquinate dehydratase">
    <location>
        <begin position="1"/>
        <end position="225"/>
    </location>
</feature>
<feature type="active site" description="Proton donor/acceptor" evidence="1">
    <location>
        <position position="118"/>
    </location>
</feature>
<feature type="active site" description="Schiff-base intermediate with substrate" evidence="1">
    <location>
        <position position="143"/>
    </location>
</feature>
<feature type="binding site" evidence="1">
    <location>
        <begin position="30"/>
        <end position="32"/>
    </location>
    <ligand>
        <name>3-dehydroquinate</name>
        <dbReference type="ChEBI" id="CHEBI:32364"/>
    </ligand>
</feature>
<feature type="binding site" evidence="1">
    <location>
        <position position="62"/>
    </location>
    <ligand>
        <name>3-dehydroquinate</name>
        <dbReference type="ChEBI" id="CHEBI:32364"/>
    </ligand>
</feature>
<feature type="binding site" evidence="1">
    <location>
        <position position="186"/>
    </location>
    <ligand>
        <name>3-dehydroquinate</name>
        <dbReference type="ChEBI" id="CHEBI:32364"/>
    </ligand>
</feature>
<feature type="binding site" evidence="1">
    <location>
        <position position="209"/>
    </location>
    <ligand>
        <name>3-dehydroquinate</name>
        <dbReference type="ChEBI" id="CHEBI:32364"/>
    </ligand>
</feature>
<gene>
    <name evidence="1" type="primary">aroD</name>
    <name type="ordered locus">gbs1449</name>
</gene>
<protein>
    <recommendedName>
        <fullName evidence="1">3-dehydroquinate dehydratase</fullName>
        <shortName evidence="1">3-dehydroquinase</shortName>
        <ecNumber evidence="1">4.2.1.10</ecNumber>
    </recommendedName>
    <alternativeName>
        <fullName evidence="1">Type I DHQase</fullName>
    </alternativeName>
    <alternativeName>
        <fullName evidence="1">Type I dehydroquinase</fullName>
        <shortName evidence="1">DHQ1</shortName>
    </alternativeName>
</protein>
<keyword id="KW-0028">Amino-acid biosynthesis</keyword>
<keyword id="KW-0057">Aromatic amino acid biosynthesis</keyword>
<keyword id="KW-0456">Lyase</keyword>
<keyword id="KW-0704">Schiff base</keyword>